<comment type="function">
    <text evidence="1">Isomerase that catalyzes the conversion of deoxy-ribose 1-phosphate (dRib-1-P) and ribose 1-phosphate (Rib-1-P) to deoxy-ribose 5-phosphate (dRib-5-P) and ribose 5-phosphate (Rib-5-P), respectively.</text>
</comment>
<comment type="catalytic activity">
    <reaction evidence="1">
        <text>2-deoxy-alpha-D-ribose 1-phosphate = 2-deoxy-D-ribose 5-phosphate</text>
        <dbReference type="Rhea" id="RHEA:27658"/>
        <dbReference type="ChEBI" id="CHEBI:57259"/>
        <dbReference type="ChEBI" id="CHEBI:62877"/>
        <dbReference type="EC" id="5.4.2.7"/>
    </reaction>
</comment>
<comment type="catalytic activity">
    <reaction evidence="1">
        <text>alpha-D-ribose 1-phosphate = D-ribose 5-phosphate</text>
        <dbReference type="Rhea" id="RHEA:18793"/>
        <dbReference type="ChEBI" id="CHEBI:57720"/>
        <dbReference type="ChEBI" id="CHEBI:78346"/>
        <dbReference type="EC" id="5.4.2.7"/>
    </reaction>
</comment>
<comment type="cofactor">
    <cofactor evidence="1">
        <name>Mn(2+)</name>
        <dbReference type="ChEBI" id="CHEBI:29035"/>
    </cofactor>
    <text evidence="1">Binds 2 manganese ions.</text>
</comment>
<comment type="pathway">
    <text evidence="1">Carbohydrate degradation; 2-deoxy-D-ribose 1-phosphate degradation; D-glyceraldehyde 3-phosphate and acetaldehyde from 2-deoxy-alpha-D-ribose 1-phosphate: step 1/2.</text>
</comment>
<comment type="subcellular location">
    <subcellularLocation>
        <location evidence="1">Cytoplasm</location>
    </subcellularLocation>
</comment>
<comment type="similarity">
    <text evidence="1">Belongs to the phosphopentomutase family.</text>
</comment>
<dbReference type="EC" id="5.4.2.7" evidence="1"/>
<dbReference type="EMBL" id="BX571857">
    <property type="protein sequence ID" value="CAG41881.1"/>
    <property type="molecule type" value="Genomic_DNA"/>
</dbReference>
<dbReference type="RefSeq" id="WP_000197806.1">
    <property type="nucleotide sequence ID" value="NC_002953.3"/>
</dbReference>
<dbReference type="SMR" id="Q6GCY5"/>
<dbReference type="KEGG" id="sas:SAS0113"/>
<dbReference type="HOGENOM" id="CLU_053861_0_0_9"/>
<dbReference type="UniPathway" id="UPA00002">
    <property type="reaction ID" value="UER00467"/>
</dbReference>
<dbReference type="GO" id="GO:0005829">
    <property type="term" value="C:cytosol"/>
    <property type="evidence" value="ECO:0007669"/>
    <property type="project" value="TreeGrafter"/>
</dbReference>
<dbReference type="GO" id="GO:0000287">
    <property type="term" value="F:magnesium ion binding"/>
    <property type="evidence" value="ECO:0007669"/>
    <property type="project" value="InterPro"/>
</dbReference>
<dbReference type="GO" id="GO:0030145">
    <property type="term" value="F:manganese ion binding"/>
    <property type="evidence" value="ECO:0007669"/>
    <property type="project" value="UniProtKB-UniRule"/>
</dbReference>
<dbReference type="GO" id="GO:0008973">
    <property type="term" value="F:phosphopentomutase activity"/>
    <property type="evidence" value="ECO:0007669"/>
    <property type="project" value="UniProtKB-UniRule"/>
</dbReference>
<dbReference type="GO" id="GO:0006018">
    <property type="term" value="P:2-deoxyribose 1-phosphate catabolic process"/>
    <property type="evidence" value="ECO:0007669"/>
    <property type="project" value="UniProtKB-UniRule"/>
</dbReference>
<dbReference type="GO" id="GO:0006015">
    <property type="term" value="P:5-phosphoribose 1-diphosphate biosynthetic process"/>
    <property type="evidence" value="ECO:0007669"/>
    <property type="project" value="UniProtKB-UniPathway"/>
</dbReference>
<dbReference type="GO" id="GO:0043094">
    <property type="term" value="P:metabolic compound salvage"/>
    <property type="evidence" value="ECO:0007669"/>
    <property type="project" value="InterPro"/>
</dbReference>
<dbReference type="GO" id="GO:0009117">
    <property type="term" value="P:nucleotide metabolic process"/>
    <property type="evidence" value="ECO:0007669"/>
    <property type="project" value="InterPro"/>
</dbReference>
<dbReference type="CDD" id="cd16009">
    <property type="entry name" value="PPM"/>
    <property type="match status" value="1"/>
</dbReference>
<dbReference type="FunFam" id="3.30.70.1250:FF:000001">
    <property type="entry name" value="Phosphopentomutase"/>
    <property type="match status" value="1"/>
</dbReference>
<dbReference type="Gene3D" id="3.40.720.10">
    <property type="entry name" value="Alkaline Phosphatase, subunit A"/>
    <property type="match status" value="1"/>
</dbReference>
<dbReference type="Gene3D" id="3.30.70.1250">
    <property type="entry name" value="Phosphopentomutase"/>
    <property type="match status" value="1"/>
</dbReference>
<dbReference type="HAMAP" id="MF_00740">
    <property type="entry name" value="Phosphopentomut"/>
    <property type="match status" value="1"/>
</dbReference>
<dbReference type="InterPro" id="IPR017850">
    <property type="entry name" value="Alkaline_phosphatase_core_sf"/>
</dbReference>
<dbReference type="InterPro" id="IPR010045">
    <property type="entry name" value="DeoB"/>
</dbReference>
<dbReference type="InterPro" id="IPR006124">
    <property type="entry name" value="Metalloenzyme"/>
</dbReference>
<dbReference type="InterPro" id="IPR024052">
    <property type="entry name" value="Phosphopentomutase_DeoB_cap_sf"/>
</dbReference>
<dbReference type="NCBIfam" id="TIGR01696">
    <property type="entry name" value="deoB"/>
    <property type="match status" value="1"/>
</dbReference>
<dbReference type="NCBIfam" id="NF003766">
    <property type="entry name" value="PRK05362.1"/>
    <property type="match status" value="1"/>
</dbReference>
<dbReference type="PANTHER" id="PTHR21110">
    <property type="entry name" value="PHOSPHOPENTOMUTASE"/>
    <property type="match status" value="1"/>
</dbReference>
<dbReference type="PANTHER" id="PTHR21110:SF0">
    <property type="entry name" value="PHOSPHOPENTOMUTASE"/>
    <property type="match status" value="1"/>
</dbReference>
<dbReference type="Pfam" id="PF01676">
    <property type="entry name" value="Metalloenzyme"/>
    <property type="match status" value="1"/>
</dbReference>
<dbReference type="PIRSF" id="PIRSF001491">
    <property type="entry name" value="Ppentomutase"/>
    <property type="match status" value="1"/>
</dbReference>
<dbReference type="SUPFAM" id="SSF53649">
    <property type="entry name" value="Alkaline phosphatase-like"/>
    <property type="match status" value="1"/>
</dbReference>
<dbReference type="SUPFAM" id="SSF143856">
    <property type="entry name" value="DeoB insert domain-like"/>
    <property type="match status" value="1"/>
</dbReference>
<sequence>MTRPFNRVHLIVMDSVGIGEAPDAADFKDEGSHTLRHTLEGFDQTLPNLEKLGLGNIDKLPVVNAVEQPEAYYTKLSEASVGKDTMTGHWEIMGLNIMQPFKVYPNGFPEELIQQIEEMTGRKVVANKPASGTQIIDEWGEHQMKTGDLIVYTSADPVLQIAAHEDIIPLEELYDICEKVRELTKDPKYLIGRIIARPYVGEPGNFTRTSNRHDYALKPFGKTVLDHLKDGGYDVIAIGKINDIYDGEGVTEAVRTKSNMDGMDQLMKIVKKDFTGISFLNLVDFDALYGHRRDKPGYAQAIKDFDDRLPELFSNLKEDDLVIITADHGNDPTAPGTDHTREYIPVIMYSPKFKGGHALESDTTFSSIGATIADNFNVTLPEFGKSYLKELK</sequence>
<evidence type="ECO:0000255" key="1">
    <source>
        <dbReference type="HAMAP-Rule" id="MF_00740"/>
    </source>
</evidence>
<organism>
    <name type="scientific">Staphylococcus aureus (strain MSSA476)</name>
    <dbReference type="NCBI Taxonomy" id="282459"/>
    <lineage>
        <taxon>Bacteria</taxon>
        <taxon>Bacillati</taxon>
        <taxon>Bacillota</taxon>
        <taxon>Bacilli</taxon>
        <taxon>Bacillales</taxon>
        <taxon>Staphylococcaceae</taxon>
        <taxon>Staphylococcus</taxon>
    </lineage>
</organism>
<accession>Q6GCY5</accession>
<gene>
    <name evidence="1" type="primary">deoB</name>
    <name type="synonym">drm</name>
    <name type="ordered locus">SAS0113</name>
</gene>
<feature type="chain" id="PRO_0000199843" description="Phosphopentomutase">
    <location>
        <begin position="1"/>
        <end position="392"/>
    </location>
</feature>
<feature type="binding site" evidence="1">
    <location>
        <position position="14"/>
    </location>
    <ligand>
        <name>Mn(2+)</name>
        <dbReference type="ChEBI" id="CHEBI:29035"/>
        <label>1</label>
    </ligand>
</feature>
<feature type="binding site" evidence="1">
    <location>
        <position position="286"/>
    </location>
    <ligand>
        <name>Mn(2+)</name>
        <dbReference type="ChEBI" id="CHEBI:29035"/>
        <label>2</label>
    </ligand>
</feature>
<feature type="binding site" evidence="1">
    <location>
        <position position="291"/>
    </location>
    <ligand>
        <name>Mn(2+)</name>
        <dbReference type="ChEBI" id="CHEBI:29035"/>
        <label>2</label>
    </ligand>
</feature>
<feature type="binding site" evidence="1">
    <location>
        <position position="327"/>
    </location>
    <ligand>
        <name>Mn(2+)</name>
        <dbReference type="ChEBI" id="CHEBI:29035"/>
        <label>1</label>
    </ligand>
</feature>
<feature type="binding site" evidence="1">
    <location>
        <position position="328"/>
    </location>
    <ligand>
        <name>Mn(2+)</name>
        <dbReference type="ChEBI" id="CHEBI:29035"/>
        <label>1</label>
    </ligand>
</feature>
<feature type="binding site" evidence="1">
    <location>
        <position position="339"/>
    </location>
    <ligand>
        <name>Mn(2+)</name>
        <dbReference type="ChEBI" id="CHEBI:29035"/>
        <label>2</label>
    </ligand>
</feature>
<proteinExistence type="inferred from homology"/>
<name>DEOB_STAAS</name>
<keyword id="KW-0963">Cytoplasm</keyword>
<keyword id="KW-0413">Isomerase</keyword>
<keyword id="KW-0464">Manganese</keyword>
<keyword id="KW-0479">Metal-binding</keyword>
<reference key="1">
    <citation type="journal article" date="2004" name="Proc. Natl. Acad. Sci. U.S.A.">
        <title>Complete genomes of two clinical Staphylococcus aureus strains: evidence for the rapid evolution of virulence and drug resistance.</title>
        <authorList>
            <person name="Holden M.T.G."/>
            <person name="Feil E.J."/>
            <person name="Lindsay J.A."/>
            <person name="Peacock S.J."/>
            <person name="Day N.P.J."/>
            <person name="Enright M.C."/>
            <person name="Foster T.J."/>
            <person name="Moore C.E."/>
            <person name="Hurst L."/>
            <person name="Atkin R."/>
            <person name="Barron A."/>
            <person name="Bason N."/>
            <person name="Bentley S.D."/>
            <person name="Chillingworth C."/>
            <person name="Chillingworth T."/>
            <person name="Churcher C."/>
            <person name="Clark L."/>
            <person name="Corton C."/>
            <person name="Cronin A."/>
            <person name="Doggett J."/>
            <person name="Dowd L."/>
            <person name="Feltwell T."/>
            <person name="Hance Z."/>
            <person name="Harris B."/>
            <person name="Hauser H."/>
            <person name="Holroyd S."/>
            <person name="Jagels K."/>
            <person name="James K.D."/>
            <person name="Lennard N."/>
            <person name="Line A."/>
            <person name="Mayes R."/>
            <person name="Moule S."/>
            <person name="Mungall K."/>
            <person name="Ormond D."/>
            <person name="Quail M.A."/>
            <person name="Rabbinowitsch E."/>
            <person name="Rutherford K.M."/>
            <person name="Sanders M."/>
            <person name="Sharp S."/>
            <person name="Simmonds M."/>
            <person name="Stevens K."/>
            <person name="Whitehead S."/>
            <person name="Barrell B.G."/>
            <person name="Spratt B.G."/>
            <person name="Parkhill J."/>
        </authorList>
    </citation>
    <scope>NUCLEOTIDE SEQUENCE [LARGE SCALE GENOMIC DNA]</scope>
    <source>
        <strain>MSSA476</strain>
    </source>
</reference>
<protein>
    <recommendedName>
        <fullName evidence="1">Phosphopentomutase</fullName>
        <ecNumber evidence="1">5.4.2.7</ecNumber>
    </recommendedName>
    <alternativeName>
        <fullName evidence="1">Phosphodeoxyribomutase</fullName>
    </alternativeName>
</protein>